<reference key="1">
    <citation type="journal article" date="2003" name="Nat. Genet.">
        <title>Comparative analysis of the genome sequences of Bordetella pertussis, Bordetella parapertussis and Bordetella bronchiseptica.</title>
        <authorList>
            <person name="Parkhill J."/>
            <person name="Sebaihia M."/>
            <person name="Preston A."/>
            <person name="Murphy L.D."/>
            <person name="Thomson N.R."/>
            <person name="Harris D.E."/>
            <person name="Holden M.T.G."/>
            <person name="Churcher C.M."/>
            <person name="Bentley S.D."/>
            <person name="Mungall K.L."/>
            <person name="Cerdeno-Tarraga A.-M."/>
            <person name="Temple L."/>
            <person name="James K.D."/>
            <person name="Harris B."/>
            <person name="Quail M.A."/>
            <person name="Achtman M."/>
            <person name="Atkin R."/>
            <person name="Baker S."/>
            <person name="Basham D."/>
            <person name="Bason N."/>
            <person name="Cherevach I."/>
            <person name="Chillingworth T."/>
            <person name="Collins M."/>
            <person name="Cronin A."/>
            <person name="Davis P."/>
            <person name="Doggett J."/>
            <person name="Feltwell T."/>
            <person name="Goble A."/>
            <person name="Hamlin N."/>
            <person name="Hauser H."/>
            <person name="Holroyd S."/>
            <person name="Jagels K."/>
            <person name="Leather S."/>
            <person name="Moule S."/>
            <person name="Norberczak H."/>
            <person name="O'Neil S."/>
            <person name="Ormond D."/>
            <person name="Price C."/>
            <person name="Rabbinowitsch E."/>
            <person name="Rutter S."/>
            <person name="Sanders M."/>
            <person name="Saunders D."/>
            <person name="Seeger K."/>
            <person name="Sharp S."/>
            <person name="Simmonds M."/>
            <person name="Skelton J."/>
            <person name="Squares R."/>
            <person name="Squares S."/>
            <person name="Stevens K."/>
            <person name="Unwin L."/>
            <person name="Whitehead S."/>
            <person name="Barrell B.G."/>
            <person name="Maskell D.J."/>
        </authorList>
    </citation>
    <scope>NUCLEOTIDE SEQUENCE [LARGE SCALE GENOMIC DNA]</scope>
    <source>
        <strain>ATCC BAA-588 / NCTC 13252 / RB50</strain>
    </source>
</reference>
<accession>Q7WCP6</accession>
<name>ILVC_BORBR</name>
<organism>
    <name type="scientific">Bordetella bronchiseptica (strain ATCC BAA-588 / NCTC 13252 / RB50)</name>
    <name type="common">Alcaligenes bronchisepticus</name>
    <dbReference type="NCBI Taxonomy" id="257310"/>
    <lineage>
        <taxon>Bacteria</taxon>
        <taxon>Pseudomonadati</taxon>
        <taxon>Pseudomonadota</taxon>
        <taxon>Betaproteobacteria</taxon>
        <taxon>Burkholderiales</taxon>
        <taxon>Alcaligenaceae</taxon>
        <taxon>Bordetella</taxon>
    </lineage>
</organism>
<sequence>MKVFYDKDCDLSLVKGKTVAIIGYGSQGHAHALNLHDSGVKVVVGLRKGGASWNKAANAGLEVAEVAEAVKRADIVMMLLPDENIAAVYRDEVHANIKAGAALAFAHGFNVHYGQVVPREDIDVIMVAPKAPGHTVRSTYSQGGGVPHLIAVYQDKSGSARDVALSYASANGGGRAGIIETNFREETETDLFGEQAVLCGGTVELIKAGFDTLVEAGYAPEMAYFECLHELKLIVDLIYEGGIANMNYSISNNAEFGEYETGPKVVTDATRQAMRECLTAIQTGEYAKKFILENAAGAPTLTSRRRINAESQIEQVGGKLRAMMPWIAANKLVDKAKN</sequence>
<proteinExistence type="inferred from homology"/>
<dbReference type="EC" id="1.1.1.86" evidence="1"/>
<dbReference type="EMBL" id="BX640448">
    <property type="protein sequence ID" value="CAE35859.1"/>
    <property type="molecule type" value="Genomic_DNA"/>
</dbReference>
<dbReference type="RefSeq" id="WP_003814005.1">
    <property type="nucleotide sequence ID" value="NC_002927.3"/>
</dbReference>
<dbReference type="SMR" id="Q7WCP6"/>
<dbReference type="GeneID" id="93205220"/>
<dbReference type="KEGG" id="bbr:BB3885"/>
<dbReference type="eggNOG" id="COG0059">
    <property type="taxonomic scope" value="Bacteria"/>
</dbReference>
<dbReference type="HOGENOM" id="CLU_033821_0_1_4"/>
<dbReference type="UniPathway" id="UPA00047">
    <property type="reaction ID" value="UER00056"/>
</dbReference>
<dbReference type="UniPathway" id="UPA00049">
    <property type="reaction ID" value="UER00060"/>
</dbReference>
<dbReference type="Proteomes" id="UP000001027">
    <property type="component" value="Chromosome"/>
</dbReference>
<dbReference type="GO" id="GO:0005829">
    <property type="term" value="C:cytosol"/>
    <property type="evidence" value="ECO:0007669"/>
    <property type="project" value="TreeGrafter"/>
</dbReference>
<dbReference type="GO" id="GO:0004455">
    <property type="term" value="F:ketol-acid reductoisomerase activity"/>
    <property type="evidence" value="ECO:0007669"/>
    <property type="project" value="UniProtKB-UniRule"/>
</dbReference>
<dbReference type="GO" id="GO:0000287">
    <property type="term" value="F:magnesium ion binding"/>
    <property type="evidence" value="ECO:0007669"/>
    <property type="project" value="UniProtKB-UniRule"/>
</dbReference>
<dbReference type="GO" id="GO:0050661">
    <property type="term" value="F:NADP binding"/>
    <property type="evidence" value="ECO:0007669"/>
    <property type="project" value="InterPro"/>
</dbReference>
<dbReference type="GO" id="GO:0009097">
    <property type="term" value="P:isoleucine biosynthetic process"/>
    <property type="evidence" value="ECO:0007669"/>
    <property type="project" value="UniProtKB-UniRule"/>
</dbReference>
<dbReference type="GO" id="GO:0009099">
    <property type="term" value="P:L-valine biosynthetic process"/>
    <property type="evidence" value="ECO:0007669"/>
    <property type="project" value="UniProtKB-UniRule"/>
</dbReference>
<dbReference type="FunFam" id="3.40.50.720:FF:000023">
    <property type="entry name" value="Ketol-acid reductoisomerase (NADP(+))"/>
    <property type="match status" value="1"/>
</dbReference>
<dbReference type="Gene3D" id="6.10.240.10">
    <property type="match status" value="1"/>
</dbReference>
<dbReference type="Gene3D" id="3.40.50.720">
    <property type="entry name" value="NAD(P)-binding Rossmann-like Domain"/>
    <property type="match status" value="1"/>
</dbReference>
<dbReference type="HAMAP" id="MF_00435">
    <property type="entry name" value="IlvC"/>
    <property type="match status" value="1"/>
</dbReference>
<dbReference type="InterPro" id="IPR008927">
    <property type="entry name" value="6-PGluconate_DH-like_C_sf"/>
</dbReference>
<dbReference type="InterPro" id="IPR013023">
    <property type="entry name" value="KARI"/>
</dbReference>
<dbReference type="InterPro" id="IPR000506">
    <property type="entry name" value="KARI_C"/>
</dbReference>
<dbReference type="InterPro" id="IPR013116">
    <property type="entry name" value="KARI_N"/>
</dbReference>
<dbReference type="InterPro" id="IPR014359">
    <property type="entry name" value="KARI_prok"/>
</dbReference>
<dbReference type="InterPro" id="IPR036291">
    <property type="entry name" value="NAD(P)-bd_dom_sf"/>
</dbReference>
<dbReference type="NCBIfam" id="TIGR00465">
    <property type="entry name" value="ilvC"/>
    <property type="match status" value="1"/>
</dbReference>
<dbReference type="NCBIfam" id="NF004017">
    <property type="entry name" value="PRK05479.1"/>
    <property type="match status" value="1"/>
</dbReference>
<dbReference type="NCBIfam" id="NF009940">
    <property type="entry name" value="PRK13403.1"/>
    <property type="match status" value="1"/>
</dbReference>
<dbReference type="PANTHER" id="PTHR21371">
    <property type="entry name" value="KETOL-ACID REDUCTOISOMERASE, MITOCHONDRIAL"/>
    <property type="match status" value="1"/>
</dbReference>
<dbReference type="PANTHER" id="PTHR21371:SF1">
    <property type="entry name" value="KETOL-ACID REDUCTOISOMERASE, MITOCHONDRIAL"/>
    <property type="match status" value="1"/>
</dbReference>
<dbReference type="Pfam" id="PF01450">
    <property type="entry name" value="KARI_C"/>
    <property type="match status" value="1"/>
</dbReference>
<dbReference type="Pfam" id="PF07991">
    <property type="entry name" value="KARI_N"/>
    <property type="match status" value="1"/>
</dbReference>
<dbReference type="PIRSF" id="PIRSF000116">
    <property type="entry name" value="IlvC_gammaproteo"/>
    <property type="match status" value="1"/>
</dbReference>
<dbReference type="SUPFAM" id="SSF48179">
    <property type="entry name" value="6-phosphogluconate dehydrogenase C-terminal domain-like"/>
    <property type="match status" value="1"/>
</dbReference>
<dbReference type="SUPFAM" id="SSF51735">
    <property type="entry name" value="NAD(P)-binding Rossmann-fold domains"/>
    <property type="match status" value="1"/>
</dbReference>
<dbReference type="PROSITE" id="PS51851">
    <property type="entry name" value="KARI_C"/>
    <property type="match status" value="1"/>
</dbReference>
<dbReference type="PROSITE" id="PS51850">
    <property type="entry name" value="KARI_N"/>
    <property type="match status" value="1"/>
</dbReference>
<feature type="chain" id="PRO_0000151280" description="Ketol-acid reductoisomerase (NADP(+))">
    <location>
        <begin position="1"/>
        <end position="338"/>
    </location>
</feature>
<feature type="domain" description="KARI N-terminal Rossmann" evidence="2">
    <location>
        <begin position="1"/>
        <end position="181"/>
    </location>
</feature>
<feature type="domain" description="KARI C-terminal knotted" evidence="3">
    <location>
        <begin position="182"/>
        <end position="327"/>
    </location>
</feature>
<feature type="active site" evidence="1">
    <location>
        <position position="107"/>
    </location>
</feature>
<feature type="binding site" evidence="1">
    <location>
        <begin position="24"/>
        <end position="27"/>
    </location>
    <ligand>
        <name>NADP(+)</name>
        <dbReference type="ChEBI" id="CHEBI:58349"/>
    </ligand>
</feature>
<feature type="binding site" evidence="1">
    <location>
        <position position="47"/>
    </location>
    <ligand>
        <name>NADP(+)</name>
        <dbReference type="ChEBI" id="CHEBI:58349"/>
    </ligand>
</feature>
<feature type="binding site" evidence="1">
    <location>
        <position position="52"/>
    </location>
    <ligand>
        <name>NADP(+)</name>
        <dbReference type="ChEBI" id="CHEBI:58349"/>
    </ligand>
</feature>
<feature type="binding site" evidence="1">
    <location>
        <position position="133"/>
    </location>
    <ligand>
        <name>NADP(+)</name>
        <dbReference type="ChEBI" id="CHEBI:58349"/>
    </ligand>
</feature>
<feature type="binding site" evidence="1">
    <location>
        <position position="190"/>
    </location>
    <ligand>
        <name>Mg(2+)</name>
        <dbReference type="ChEBI" id="CHEBI:18420"/>
        <label>1</label>
    </ligand>
</feature>
<feature type="binding site" evidence="1">
    <location>
        <position position="190"/>
    </location>
    <ligand>
        <name>Mg(2+)</name>
        <dbReference type="ChEBI" id="CHEBI:18420"/>
        <label>2</label>
    </ligand>
</feature>
<feature type="binding site" evidence="1">
    <location>
        <position position="194"/>
    </location>
    <ligand>
        <name>Mg(2+)</name>
        <dbReference type="ChEBI" id="CHEBI:18420"/>
        <label>1</label>
    </ligand>
</feature>
<feature type="binding site" evidence="1">
    <location>
        <position position="226"/>
    </location>
    <ligand>
        <name>Mg(2+)</name>
        <dbReference type="ChEBI" id="CHEBI:18420"/>
        <label>2</label>
    </ligand>
</feature>
<feature type="binding site" evidence="1">
    <location>
        <position position="230"/>
    </location>
    <ligand>
        <name>Mg(2+)</name>
        <dbReference type="ChEBI" id="CHEBI:18420"/>
        <label>2</label>
    </ligand>
</feature>
<feature type="binding site" evidence="1">
    <location>
        <position position="251"/>
    </location>
    <ligand>
        <name>substrate</name>
    </ligand>
</feature>
<protein>
    <recommendedName>
        <fullName evidence="1">Ketol-acid reductoisomerase (NADP(+))</fullName>
        <shortName evidence="1">KARI</shortName>
        <ecNumber evidence="1">1.1.1.86</ecNumber>
    </recommendedName>
    <alternativeName>
        <fullName evidence="1">Acetohydroxy-acid isomeroreductase</fullName>
        <shortName evidence="1">AHIR</shortName>
    </alternativeName>
    <alternativeName>
        <fullName evidence="1">Alpha-keto-beta-hydroxylacyl reductoisomerase</fullName>
    </alternativeName>
    <alternativeName>
        <fullName evidence="1">Ketol-acid reductoisomerase type 1</fullName>
    </alternativeName>
    <alternativeName>
        <fullName evidence="1">Ketol-acid reductoisomerase type I</fullName>
    </alternativeName>
</protein>
<keyword id="KW-0028">Amino-acid biosynthesis</keyword>
<keyword id="KW-0100">Branched-chain amino acid biosynthesis</keyword>
<keyword id="KW-0460">Magnesium</keyword>
<keyword id="KW-0479">Metal-binding</keyword>
<keyword id="KW-0521">NADP</keyword>
<keyword id="KW-0560">Oxidoreductase</keyword>
<comment type="function">
    <text evidence="1">Involved in the biosynthesis of branched-chain amino acids (BCAA). Catalyzes an alkyl-migration followed by a ketol-acid reduction of (S)-2-acetolactate (S2AL) to yield (R)-2,3-dihydroxy-isovalerate. In the isomerase reaction, S2AL is rearranged via a Mg-dependent methyl migration to produce 3-hydroxy-3-methyl-2-ketobutyrate (HMKB). In the reductase reaction, this 2-ketoacid undergoes a metal-dependent reduction by NADPH to yield (R)-2,3-dihydroxy-isovalerate.</text>
</comment>
<comment type="catalytic activity">
    <reaction evidence="1">
        <text>(2R)-2,3-dihydroxy-3-methylbutanoate + NADP(+) = (2S)-2-acetolactate + NADPH + H(+)</text>
        <dbReference type="Rhea" id="RHEA:22068"/>
        <dbReference type="ChEBI" id="CHEBI:15378"/>
        <dbReference type="ChEBI" id="CHEBI:49072"/>
        <dbReference type="ChEBI" id="CHEBI:57783"/>
        <dbReference type="ChEBI" id="CHEBI:58349"/>
        <dbReference type="ChEBI" id="CHEBI:58476"/>
        <dbReference type="EC" id="1.1.1.86"/>
    </reaction>
</comment>
<comment type="catalytic activity">
    <reaction evidence="1">
        <text>(2R,3R)-2,3-dihydroxy-3-methylpentanoate + NADP(+) = (S)-2-ethyl-2-hydroxy-3-oxobutanoate + NADPH + H(+)</text>
        <dbReference type="Rhea" id="RHEA:13493"/>
        <dbReference type="ChEBI" id="CHEBI:15378"/>
        <dbReference type="ChEBI" id="CHEBI:49256"/>
        <dbReference type="ChEBI" id="CHEBI:49258"/>
        <dbReference type="ChEBI" id="CHEBI:57783"/>
        <dbReference type="ChEBI" id="CHEBI:58349"/>
        <dbReference type="EC" id="1.1.1.86"/>
    </reaction>
</comment>
<comment type="cofactor">
    <cofactor evidence="1">
        <name>Mg(2+)</name>
        <dbReference type="ChEBI" id="CHEBI:18420"/>
    </cofactor>
    <text evidence="1">Binds 2 magnesium ions per subunit.</text>
</comment>
<comment type="pathway">
    <text evidence="1">Amino-acid biosynthesis; L-isoleucine biosynthesis; L-isoleucine from 2-oxobutanoate: step 2/4.</text>
</comment>
<comment type="pathway">
    <text evidence="1">Amino-acid biosynthesis; L-valine biosynthesis; L-valine from pyruvate: step 2/4.</text>
</comment>
<comment type="similarity">
    <text evidence="1">Belongs to the ketol-acid reductoisomerase family.</text>
</comment>
<gene>
    <name evidence="1" type="primary">ilvC</name>
    <name type="ordered locus">BB3885</name>
</gene>
<evidence type="ECO:0000255" key="1">
    <source>
        <dbReference type="HAMAP-Rule" id="MF_00435"/>
    </source>
</evidence>
<evidence type="ECO:0000255" key="2">
    <source>
        <dbReference type="PROSITE-ProRule" id="PRU01197"/>
    </source>
</evidence>
<evidence type="ECO:0000255" key="3">
    <source>
        <dbReference type="PROSITE-ProRule" id="PRU01198"/>
    </source>
</evidence>